<reference key="1">
    <citation type="journal article" date="2001" name="DNA Res.">
        <title>Complete genome sequence of an aerobic thermoacidophilic Crenarchaeon, Sulfolobus tokodaii strain7.</title>
        <authorList>
            <person name="Kawarabayasi Y."/>
            <person name="Hino Y."/>
            <person name="Horikawa H."/>
            <person name="Jin-no K."/>
            <person name="Takahashi M."/>
            <person name="Sekine M."/>
            <person name="Baba S."/>
            <person name="Ankai A."/>
            <person name="Kosugi H."/>
            <person name="Hosoyama A."/>
            <person name="Fukui S."/>
            <person name="Nagai Y."/>
            <person name="Nishijima K."/>
            <person name="Otsuka R."/>
            <person name="Nakazawa H."/>
            <person name="Takamiya M."/>
            <person name="Kato Y."/>
            <person name="Yoshizawa T."/>
            <person name="Tanaka T."/>
            <person name="Kudoh Y."/>
            <person name="Yamazaki J."/>
            <person name="Kushida N."/>
            <person name="Oguchi A."/>
            <person name="Aoki K."/>
            <person name="Masuda S."/>
            <person name="Yanagii M."/>
            <person name="Nishimura M."/>
            <person name="Yamagishi A."/>
            <person name="Oshima T."/>
            <person name="Kikuchi H."/>
        </authorList>
    </citation>
    <scope>NUCLEOTIDE SEQUENCE [LARGE SCALE GENOMIC DNA]</scope>
    <source>
        <strain>DSM 16993 / JCM 10545 / NBRC 100140 / 7</strain>
    </source>
</reference>
<reference key="2">
    <citation type="journal article" date="2008" name="Acta Crystallogr. F">
        <title>Structure of a putative molybdenum-cofactor biosynthesis protein C (MoaC) from Sulfolobus tokodaii (ST0472).</title>
        <authorList>
            <person name="Yoshida H."/>
            <person name="Yamada M."/>
            <person name="Kuramitsu S."/>
            <person name="Kamitori S."/>
        </authorList>
    </citation>
    <scope>X-RAY CRYSTALLOGRAPHY (2.2 ANGSTROMS)</scope>
    <scope>SUBUNIT</scope>
</reference>
<comment type="function">
    <text evidence="1">Catalyzes the conversion of (8S)-3',8-cyclo-7,8-dihydroguanosine 5'-triphosphate to cyclic pyranopterin monophosphate (cPMP).</text>
</comment>
<comment type="catalytic activity">
    <reaction evidence="1">
        <text>(8S)-3',8-cyclo-7,8-dihydroguanosine 5'-triphosphate = cyclic pyranopterin phosphate + diphosphate</text>
        <dbReference type="Rhea" id="RHEA:49580"/>
        <dbReference type="ChEBI" id="CHEBI:33019"/>
        <dbReference type="ChEBI" id="CHEBI:59648"/>
        <dbReference type="ChEBI" id="CHEBI:131766"/>
        <dbReference type="EC" id="4.6.1.17"/>
    </reaction>
</comment>
<comment type="pathway">
    <text evidence="1">Cofactor biosynthesis; molybdopterin biosynthesis.</text>
</comment>
<comment type="subunit">
    <text evidence="1 2">Homohexamer; trimer of dimers.</text>
</comment>
<comment type="similarity">
    <text evidence="1">Belongs to the MoaC family.</text>
</comment>
<protein>
    <recommendedName>
        <fullName evidence="1">Probable cyclic pyranopterin monophosphate synthase</fullName>
        <ecNumber evidence="1">4.6.1.17</ecNumber>
    </recommendedName>
    <alternativeName>
        <fullName evidence="1">Molybdenum cofactor biosynthesis protein C</fullName>
    </alternativeName>
</protein>
<proteinExistence type="evidence at protein level"/>
<organism>
    <name type="scientific">Sulfurisphaera tokodaii (strain DSM 16993 / JCM 10545 / NBRC 100140 / 7)</name>
    <name type="common">Sulfolobus tokodaii</name>
    <dbReference type="NCBI Taxonomy" id="273063"/>
    <lineage>
        <taxon>Archaea</taxon>
        <taxon>Thermoproteota</taxon>
        <taxon>Thermoprotei</taxon>
        <taxon>Sulfolobales</taxon>
        <taxon>Sulfolobaceae</taxon>
        <taxon>Sulfurisphaera</taxon>
    </lineage>
</organism>
<keyword id="KW-0002">3D-structure</keyword>
<keyword id="KW-0456">Lyase</keyword>
<keyword id="KW-0501">Molybdenum cofactor biosynthesis</keyword>
<keyword id="KW-1185">Reference proteome</keyword>
<dbReference type="EC" id="4.6.1.17" evidence="1"/>
<dbReference type="EMBL" id="BA000023">
    <property type="protein sequence ID" value="BAB65466.1"/>
    <property type="molecule type" value="Genomic_DNA"/>
</dbReference>
<dbReference type="RefSeq" id="WP_010978449.1">
    <property type="nucleotide sequence ID" value="NC_003106.2"/>
</dbReference>
<dbReference type="PDB" id="2OHD">
    <property type="method" value="X-ray"/>
    <property type="resolution" value="2.20 A"/>
    <property type="chains" value="A/B/C/D/E/F=1-151"/>
</dbReference>
<dbReference type="PDBsum" id="2OHD"/>
<dbReference type="SMR" id="Q975D5"/>
<dbReference type="STRING" id="273063.STK_04720"/>
<dbReference type="GeneID" id="1458415"/>
<dbReference type="KEGG" id="sto:STK_04720"/>
<dbReference type="PATRIC" id="fig|273063.9.peg.547"/>
<dbReference type="eggNOG" id="arCOG01530">
    <property type="taxonomic scope" value="Archaea"/>
</dbReference>
<dbReference type="OrthoDB" id="10067at2157"/>
<dbReference type="BRENDA" id="4.6.1.17">
    <property type="organism ID" value="15396"/>
</dbReference>
<dbReference type="UniPathway" id="UPA00344"/>
<dbReference type="EvolutionaryTrace" id="Q975D5"/>
<dbReference type="Proteomes" id="UP000001015">
    <property type="component" value="Chromosome"/>
</dbReference>
<dbReference type="GO" id="GO:0061799">
    <property type="term" value="F:cyclic pyranopterin monophosphate synthase activity"/>
    <property type="evidence" value="ECO:0007669"/>
    <property type="project" value="UniProtKB-UniRule"/>
</dbReference>
<dbReference type="GO" id="GO:0061798">
    <property type="term" value="F:GTP 3',8'-cyclase activity"/>
    <property type="evidence" value="ECO:0007669"/>
    <property type="project" value="TreeGrafter"/>
</dbReference>
<dbReference type="GO" id="GO:0006777">
    <property type="term" value="P:Mo-molybdopterin cofactor biosynthetic process"/>
    <property type="evidence" value="ECO:0007669"/>
    <property type="project" value="UniProtKB-UniRule"/>
</dbReference>
<dbReference type="CDD" id="cd01419">
    <property type="entry name" value="MoaC_A"/>
    <property type="match status" value="1"/>
</dbReference>
<dbReference type="Gene3D" id="3.30.70.640">
    <property type="entry name" value="Molybdopterin cofactor biosynthesis C (MoaC) domain"/>
    <property type="match status" value="1"/>
</dbReference>
<dbReference type="HAMAP" id="MF_01224_A">
    <property type="entry name" value="MoaC_A"/>
    <property type="match status" value="1"/>
</dbReference>
<dbReference type="InterPro" id="IPR023047">
    <property type="entry name" value="Mo_CF_biosynth-C_arc"/>
</dbReference>
<dbReference type="InterPro" id="IPR023045">
    <property type="entry name" value="MoaC"/>
</dbReference>
<dbReference type="InterPro" id="IPR036522">
    <property type="entry name" value="MoaC_sf"/>
</dbReference>
<dbReference type="InterPro" id="IPR050105">
    <property type="entry name" value="MoCo_biosynth_MoaA/MoaC"/>
</dbReference>
<dbReference type="InterPro" id="IPR002820">
    <property type="entry name" value="Mopterin_CF_biosynth-C_dom"/>
</dbReference>
<dbReference type="NCBIfam" id="TIGR00581">
    <property type="entry name" value="moaC"/>
    <property type="match status" value="1"/>
</dbReference>
<dbReference type="NCBIfam" id="NF008999">
    <property type="entry name" value="PRK12343.1"/>
    <property type="match status" value="1"/>
</dbReference>
<dbReference type="PANTHER" id="PTHR22960:SF0">
    <property type="entry name" value="MOLYBDENUM COFACTOR BIOSYNTHESIS PROTEIN 1"/>
    <property type="match status" value="1"/>
</dbReference>
<dbReference type="PANTHER" id="PTHR22960">
    <property type="entry name" value="MOLYBDOPTERIN COFACTOR SYNTHESIS PROTEIN A"/>
    <property type="match status" value="1"/>
</dbReference>
<dbReference type="Pfam" id="PF01967">
    <property type="entry name" value="MoaC"/>
    <property type="match status" value="1"/>
</dbReference>
<dbReference type="SUPFAM" id="SSF55040">
    <property type="entry name" value="Molybdenum cofactor biosynthesis protein C, MoaC"/>
    <property type="match status" value="1"/>
</dbReference>
<gene>
    <name evidence="1" type="primary">moaC</name>
    <name type="ordered locus">STK_04720</name>
</gene>
<name>MOAC_SULTO</name>
<accession>Q975D5</accession>
<sequence>MTEAKIVDISSKDIVLREAVVEGYIKLRKETIEKIKNKEVEKGDVITVAKTAGILAAKKTPELIPMCHPIPLEFVDVEIKIEEEGLRVISTVKAHYKTGVEMEALTATSVALLTIWDMVKKYEKDENGQYPYTEIKSIRVINKIKTYDDMK</sequence>
<feature type="chain" id="PRO_0000097865" description="Probable cyclic pyranopterin monophosphate synthase">
    <location>
        <begin position="1"/>
        <end position="151"/>
    </location>
</feature>
<feature type="active site" evidence="1">
    <location>
        <position position="117"/>
    </location>
</feature>
<feature type="binding site" evidence="1">
    <location>
        <begin position="66"/>
        <end position="68"/>
    </location>
    <ligand>
        <name>substrate</name>
    </ligand>
</feature>
<feature type="binding site" evidence="1">
    <location>
        <begin position="102"/>
        <end position="103"/>
    </location>
    <ligand>
        <name>substrate</name>
    </ligand>
</feature>
<feature type="strand" evidence="3">
    <location>
        <begin position="15"/>
        <end position="26"/>
    </location>
</feature>
<feature type="helix" evidence="3">
    <location>
        <begin position="29"/>
        <end position="36"/>
    </location>
</feature>
<feature type="helix" evidence="3">
    <location>
        <begin position="45"/>
        <end position="63"/>
    </location>
</feature>
<feature type="strand" evidence="3">
    <location>
        <begin position="74"/>
        <end position="82"/>
    </location>
</feature>
<feature type="strand" evidence="3">
    <location>
        <begin position="85"/>
        <end position="98"/>
    </location>
</feature>
<feature type="helix" evidence="3">
    <location>
        <begin position="101"/>
        <end position="118"/>
    </location>
</feature>
<feature type="helix" evidence="3">
    <location>
        <begin position="120"/>
        <end position="123"/>
    </location>
</feature>
<feature type="strand" evidence="3">
    <location>
        <begin position="134"/>
        <end position="143"/>
    </location>
</feature>
<evidence type="ECO:0000255" key="1">
    <source>
        <dbReference type="HAMAP-Rule" id="MF_01224"/>
    </source>
</evidence>
<evidence type="ECO:0000305" key="2">
    <source>
    </source>
</evidence>
<evidence type="ECO:0007829" key="3">
    <source>
        <dbReference type="PDB" id="2OHD"/>
    </source>
</evidence>